<comment type="function">
    <text evidence="1">DNA-dependent RNA polymerase catalyzes the transcription of DNA into RNA using the four ribonucleoside triphosphates as substrates.</text>
</comment>
<comment type="catalytic activity">
    <reaction evidence="1">
        <text>RNA(n) + a ribonucleoside 5'-triphosphate = RNA(n+1) + diphosphate</text>
        <dbReference type="Rhea" id="RHEA:21248"/>
        <dbReference type="Rhea" id="RHEA-COMP:14527"/>
        <dbReference type="Rhea" id="RHEA-COMP:17342"/>
        <dbReference type="ChEBI" id="CHEBI:33019"/>
        <dbReference type="ChEBI" id="CHEBI:61557"/>
        <dbReference type="ChEBI" id="CHEBI:140395"/>
        <dbReference type="EC" id="2.7.7.6"/>
    </reaction>
</comment>
<comment type="subunit">
    <text evidence="1">The RNAP catalytic core consists of 2 alpha, 1 beta, 1 beta' and 1 omega subunit. When a sigma factor is associated with the core the holoenzyme is formed, which can initiate transcription.</text>
</comment>
<comment type="similarity">
    <text evidence="1">Belongs to the RNA polymerase beta chain family.</text>
</comment>
<name>RPOB_ACIB3</name>
<feature type="chain" id="PRO_1000141647" description="DNA-directed RNA polymerase subunit beta">
    <location>
        <begin position="1"/>
        <end position="1362"/>
    </location>
</feature>
<evidence type="ECO:0000255" key="1">
    <source>
        <dbReference type="HAMAP-Rule" id="MF_01321"/>
    </source>
</evidence>
<reference key="1">
    <citation type="journal article" date="2008" name="J. Bacteriol.">
        <title>Comparative genome sequence analysis of multidrug-resistant Acinetobacter baumannii.</title>
        <authorList>
            <person name="Adams M.D."/>
            <person name="Goglin K."/>
            <person name="Molyneaux N."/>
            <person name="Hujer K.M."/>
            <person name="Lavender H."/>
            <person name="Jamison J.J."/>
            <person name="MacDonald I.J."/>
            <person name="Martin K.M."/>
            <person name="Russo T."/>
            <person name="Campagnari A.A."/>
            <person name="Hujer A.M."/>
            <person name="Bonomo R.A."/>
            <person name="Gill S.R."/>
        </authorList>
    </citation>
    <scope>NUCLEOTIDE SEQUENCE [LARGE SCALE GENOMIC DNA]</scope>
    <source>
        <strain>AB307-0294</strain>
    </source>
</reference>
<proteinExistence type="inferred from homology"/>
<organism>
    <name type="scientific">Acinetobacter baumannii (strain AB307-0294)</name>
    <dbReference type="NCBI Taxonomy" id="557600"/>
    <lineage>
        <taxon>Bacteria</taxon>
        <taxon>Pseudomonadati</taxon>
        <taxon>Pseudomonadota</taxon>
        <taxon>Gammaproteobacteria</taxon>
        <taxon>Moraxellales</taxon>
        <taxon>Moraxellaceae</taxon>
        <taxon>Acinetobacter</taxon>
        <taxon>Acinetobacter calcoaceticus/baumannii complex</taxon>
    </lineage>
</organism>
<dbReference type="EC" id="2.7.7.6" evidence="1"/>
<dbReference type="EMBL" id="CP001172">
    <property type="protein sequence ID" value="ACJ56519.1"/>
    <property type="molecule type" value="Genomic_DNA"/>
</dbReference>
<dbReference type="RefSeq" id="WP_000331899.1">
    <property type="nucleotide sequence ID" value="NZ_CP001172.1"/>
</dbReference>
<dbReference type="SMR" id="B7H1J8"/>
<dbReference type="GeneID" id="92892284"/>
<dbReference type="HOGENOM" id="CLU_000524_4_3_6"/>
<dbReference type="Proteomes" id="UP000006924">
    <property type="component" value="Chromosome"/>
</dbReference>
<dbReference type="GO" id="GO:0000428">
    <property type="term" value="C:DNA-directed RNA polymerase complex"/>
    <property type="evidence" value="ECO:0007669"/>
    <property type="project" value="UniProtKB-KW"/>
</dbReference>
<dbReference type="GO" id="GO:0003677">
    <property type="term" value="F:DNA binding"/>
    <property type="evidence" value="ECO:0007669"/>
    <property type="project" value="UniProtKB-UniRule"/>
</dbReference>
<dbReference type="GO" id="GO:0003899">
    <property type="term" value="F:DNA-directed RNA polymerase activity"/>
    <property type="evidence" value="ECO:0007669"/>
    <property type="project" value="UniProtKB-UniRule"/>
</dbReference>
<dbReference type="GO" id="GO:0032549">
    <property type="term" value="F:ribonucleoside binding"/>
    <property type="evidence" value="ECO:0007669"/>
    <property type="project" value="InterPro"/>
</dbReference>
<dbReference type="GO" id="GO:0006351">
    <property type="term" value="P:DNA-templated transcription"/>
    <property type="evidence" value="ECO:0007669"/>
    <property type="project" value="UniProtKB-UniRule"/>
</dbReference>
<dbReference type="CDD" id="cd00653">
    <property type="entry name" value="RNA_pol_B_RPB2"/>
    <property type="match status" value="1"/>
</dbReference>
<dbReference type="FunFam" id="2.40.50.100:FF:000006">
    <property type="entry name" value="DNA-directed RNA polymerase subunit beta"/>
    <property type="match status" value="1"/>
</dbReference>
<dbReference type="FunFam" id="2.40.50.150:FF:000001">
    <property type="entry name" value="DNA-directed RNA polymerase subunit beta"/>
    <property type="match status" value="1"/>
</dbReference>
<dbReference type="FunFam" id="3.90.1110.10:FF:000001">
    <property type="entry name" value="DNA-directed RNA polymerase subunit beta"/>
    <property type="match status" value="1"/>
</dbReference>
<dbReference type="FunFam" id="3.90.1800.10:FF:000001">
    <property type="entry name" value="DNA-directed RNA polymerase subunit beta"/>
    <property type="match status" value="1"/>
</dbReference>
<dbReference type="Gene3D" id="2.40.50.100">
    <property type="match status" value="1"/>
</dbReference>
<dbReference type="Gene3D" id="2.40.50.150">
    <property type="match status" value="1"/>
</dbReference>
<dbReference type="Gene3D" id="3.90.1100.10">
    <property type="match status" value="2"/>
</dbReference>
<dbReference type="Gene3D" id="2.30.150.10">
    <property type="entry name" value="DNA-directed RNA polymerase, beta subunit, external 1 domain"/>
    <property type="match status" value="1"/>
</dbReference>
<dbReference type="Gene3D" id="2.40.270.10">
    <property type="entry name" value="DNA-directed RNA polymerase, subunit 2, domain 6"/>
    <property type="match status" value="2"/>
</dbReference>
<dbReference type="Gene3D" id="3.90.1800.10">
    <property type="entry name" value="RNA polymerase alpha subunit dimerisation domain"/>
    <property type="match status" value="1"/>
</dbReference>
<dbReference type="Gene3D" id="3.90.1110.10">
    <property type="entry name" value="RNA polymerase Rpb2, domain 2"/>
    <property type="match status" value="2"/>
</dbReference>
<dbReference type="HAMAP" id="MF_01321">
    <property type="entry name" value="RNApol_bact_RpoB"/>
    <property type="match status" value="1"/>
</dbReference>
<dbReference type="InterPro" id="IPR042107">
    <property type="entry name" value="DNA-dir_RNA_pol_bsu_ext_1_sf"/>
</dbReference>
<dbReference type="InterPro" id="IPR019462">
    <property type="entry name" value="DNA-dir_RNA_pol_bsu_external_1"/>
</dbReference>
<dbReference type="InterPro" id="IPR015712">
    <property type="entry name" value="DNA-dir_RNA_pol_su2"/>
</dbReference>
<dbReference type="InterPro" id="IPR007120">
    <property type="entry name" value="DNA-dir_RNAP_su2_dom"/>
</dbReference>
<dbReference type="InterPro" id="IPR037033">
    <property type="entry name" value="DNA-dir_RNAP_su2_hyb_sf"/>
</dbReference>
<dbReference type="InterPro" id="IPR010243">
    <property type="entry name" value="RNA_pol_bsu_bac"/>
</dbReference>
<dbReference type="InterPro" id="IPR007121">
    <property type="entry name" value="RNA_pol_bsu_CS"/>
</dbReference>
<dbReference type="InterPro" id="IPR007644">
    <property type="entry name" value="RNA_pol_bsu_protrusion"/>
</dbReference>
<dbReference type="InterPro" id="IPR007642">
    <property type="entry name" value="RNA_pol_Rpb2_2"/>
</dbReference>
<dbReference type="InterPro" id="IPR037034">
    <property type="entry name" value="RNA_pol_Rpb2_2_sf"/>
</dbReference>
<dbReference type="InterPro" id="IPR007645">
    <property type="entry name" value="RNA_pol_Rpb2_3"/>
</dbReference>
<dbReference type="InterPro" id="IPR007641">
    <property type="entry name" value="RNA_pol_Rpb2_7"/>
</dbReference>
<dbReference type="InterPro" id="IPR014724">
    <property type="entry name" value="RNA_pol_RPB2_OB-fold"/>
</dbReference>
<dbReference type="NCBIfam" id="NF001616">
    <property type="entry name" value="PRK00405.1"/>
    <property type="match status" value="1"/>
</dbReference>
<dbReference type="NCBIfam" id="TIGR02013">
    <property type="entry name" value="rpoB"/>
    <property type="match status" value="1"/>
</dbReference>
<dbReference type="PANTHER" id="PTHR20856">
    <property type="entry name" value="DNA-DIRECTED RNA POLYMERASE I SUBUNIT 2"/>
    <property type="match status" value="1"/>
</dbReference>
<dbReference type="Pfam" id="PF04563">
    <property type="entry name" value="RNA_pol_Rpb2_1"/>
    <property type="match status" value="1"/>
</dbReference>
<dbReference type="Pfam" id="PF04561">
    <property type="entry name" value="RNA_pol_Rpb2_2"/>
    <property type="match status" value="2"/>
</dbReference>
<dbReference type="Pfam" id="PF04565">
    <property type="entry name" value="RNA_pol_Rpb2_3"/>
    <property type="match status" value="1"/>
</dbReference>
<dbReference type="Pfam" id="PF10385">
    <property type="entry name" value="RNA_pol_Rpb2_45"/>
    <property type="match status" value="1"/>
</dbReference>
<dbReference type="Pfam" id="PF00562">
    <property type="entry name" value="RNA_pol_Rpb2_6"/>
    <property type="match status" value="1"/>
</dbReference>
<dbReference type="Pfam" id="PF04560">
    <property type="entry name" value="RNA_pol_Rpb2_7"/>
    <property type="match status" value="1"/>
</dbReference>
<dbReference type="SUPFAM" id="SSF64484">
    <property type="entry name" value="beta and beta-prime subunits of DNA dependent RNA-polymerase"/>
    <property type="match status" value="1"/>
</dbReference>
<dbReference type="PROSITE" id="PS01166">
    <property type="entry name" value="RNA_POL_BETA"/>
    <property type="match status" value="1"/>
</dbReference>
<gene>
    <name evidence="1" type="primary">rpoB</name>
    <name type="ordered locus">ABBFA_003248</name>
</gene>
<protein>
    <recommendedName>
        <fullName evidence="1">DNA-directed RNA polymerase subunit beta</fullName>
        <shortName evidence="1">RNAP subunit beta</shortName>
        <ecNumber evidence="1">2.7.7.6</ecNumber>
    </recommendedName>
    <alternativeName>
        <fullName evidence="1">RNA polymerase subunit beta</fullName>
    </alternativeName>
    <alternativeName>
        <fullName evidence="1">Transcriptase subunit beta</fullName>
    </alternativeName>
</protein>
<keyword id="KW-0240">DNA-directed RNA polymerase</keyword>
<keyword id="KW-0548">Nucleotidyltransferase</keyword>
<keyword id="KW-0804">Transcription</keyword>
<keyword id="KW-0808">Transferase</keyword>
<sequence>MAYSYTEKKRIRKNFGKLPQVMDAPYLLSIQVDSYRTFLQDGKSPKNREDIGLQAAFRSVFPIESYSGNAALEFVEYSLGKPEFDVRECILRGSTYAAPMRVKIRLIIKDRETKSIKDVREQEVYMGEIPLMTENGTFVINGTERVIVSQLHRSPGVFFDHDKGKTHSSGKVLYSARIIPYRGSWLDFEFDAKDLVYVRIDRRRKLLATVVLRALGYNNEQILNLFYEKVPVYLDMGSYQIDLVPERLRGEMAQFDITDNEGKVIVEQGKRINARHVRQMEAAGLTKLSVPDEYLYERITAEDITLRDGEVIAANTLLSHEVMVKLAEGGVKQFNILFTNDIDRGSFVADTLRADLTRDREEALVEIYKVMRPGEPPTKEAAENLFNNLFFSSERYDLSPVGRMKFNRRLGRPYEVGTDQKSREVEGILSHEDIIDVLRTLVEIRNGKGEVDDIDHLGNRRVRSVGEMTENQFRVGLVRVERAVKERLSQAETDNLSPQDLINAKPVAAAIKEFFGSSQLSQFMDQNNPLSEITHKRRVSALGPGGLTRERAGFEVRDVHQTHYGRVCPIETPEGPNIGLINSLSVYAKANDFGFLETPYRKVVDGRVTDDVEYLSAIEEVGTVIAQADSAVDKDGNLTEEFVSVRHQGEFVRMPPEKVTHMDVSAQQVVSVAASLIPFLEHDDANRALMGSNMQRQAVPTLRADKPLVGTGMEANVARDSGVCVIANRGGVIEYVDASRIVIRVNEDEMVAGEAGVDIYNLIKYTRSNQNTCINQNVIVNLGDKVARGDILADGPSTDMGELALGQNMRVAFMTWNGYNYEDSILLSERVLQEDRLTSIHIQELSCVARDTKLGAEEITADIPNVGEAALSKLDESGIVYIGAEVTAGDILVGKVTPKGETQLTPEEKLLRAIFGEKAADVKDSSLRVPSGTKGTVIDVQVFTRDGLEKDDRALAIEKAQLDSYRKDLKEEYKIFEEAARERVIRLLKGQESNGGGSTKRGDKLSEDLLSGLELVDLLEIQPADEAIAERLTQIQVFLKEKSAEIDEKFAEKKRKLATGDELTTGVLKVVKVYLAVKRRIQPGDKMAGRHGNKGVVSNILPVEDMPHDANGVPVDIVLNPLGVPSRMNVGQILETHLGMAAKGLGDKIEKMLKEQRTVLELREFLDKIYNKVGGEQEDLDSLTDEEILALAGNLRAGVPLATPVFDGAEESQIKDLLELADISRTGQTVLFDGRTGEQFDRPVTVGYMYMLKLNHLVDDKMHARSTGSYSLVTQQPLGGKAQFGGQRFGEMEVWALEAYGAAYTLQEMLTVKSDDVEGRTRIYKNIVDGNHYMDPGMPESFNVLTKEIRSLGINIELKNGD</sequence>
<accession>B7H1J8</accession>